<evidence type="ECO:0000255" key="1">
    <source>
        <dbReference type="HAMAP-Rule" id="MF_01506"/>
    </source>
</evidence>
<comment type="subcellular location">
    <subcellularLocation>
        <location evidence="1">Spore core</location>
    </subcellularLocation>
</comment>
<comment type="induction">
    <text evidence="1">Expressed only in the forespore compartment of sporulating cells.</text>
</comment>
<comment type="similarity">
    <text evidence="1">Belongs to the Tlp family.</text>
</comment>
<organism>
    <name type="scientific">Bacillus anthracis</name>
    <dbReference type="NCBI Taxonomy" id="1392"/>
    <lineage>
        <taxon>Bacteria</taxon>
        <taxon>Bacillati</taxon>
        <taxon>Bacillota</taxon>
        <taxon>Bacilli</taxon>
        <taxon>Bacillales</taxon>
        <taxon>Bacillaceae</taxon>
        <taxon>Bacillus</taxon>
        <taxon>Bacillus cereus group</taxon>
    </lineage>
</organism>
<proteinExistence type="inferred from homology"/>
<keyword id="KW-1185">Reference proteome</keyword>
<keyword id="KW-0749">Sporulation</keyword>
<accession>Q81Y88</accession>
<accession>Q6HVH9</accession>
<accession>Q6KPQ1</accession>
<gene>
    <name evidence="1" type="primary">tlp</name>
    <name type="ordered locus">BA_3669</name>
    <name type="ordered locus">GBAA_3669</name>
    <name type="ordered locus">BAS3403</name>
</gene>
<reference key="1">
    <citation type="journal article" date="2003" name="Nature">
        <title>The genome sequence of Bacillus anthracis Ames and comparison to closely related bacteria.</title>
        <authorList>
            <person name="Read T.D."/>
            <person name="Peterson S.N."/>
            <person name="Tourasse N.J."/>
            <person name="Baillie L.W."/>
            <person name="Paulsen I.T."/>
            <person name="Nelson K.E."/>
            <person name="Tettelin H."/>
            <person name="Fouts D.E."/>
            <person name="Eisen J.A."/>
            <person name="Gill S.R."/>
            <person name="Holtzapple E.K."/>
            <person name="Okstad O.A."/>
            <person name="Helgason E."/>
            <person name="Rilstone J."/>
            <person name="Wu M."/>
            <person name="Kolonay J.F."/>
            <person name="Beanan M.J."/>
            <person name="Dodson R.J."/>
            <person name="Brinkac L.M."/>
            <person name="Gwinn M.L."/>
            <person name="DeBoy R.T."/>
            <person name="Madpu R."/>
            <person name="Daugherty S.C."/>
            <person name="Durkin A.S."/>
            <person name="Haft D.H."/>
            <person name="Nelson W.C."/>
            <person name="Peterson J.D."/>
            <person name="Pop M."/>
            <person name="Khouri H.M."/>
            <person name="Radune D."/>
            <person name="Benton J.L."/>
            <person name="Mahamoud Y."/>
            <person name="Jiang L."/>
            <person name="Hance I.R."/>
            <person name="Weidman J.F."/>
            <person name="Berry K.J."/>
            <person name="Plaut R.D."/>
            <person name="Wolf A.M."/>
            <person name="Watkins K.L."/>
            <person name="Nierman W.C."/>
            <person name="Hazen A."/>
            <person name="Cline R.T."/>
            <person name="Redmond C."/>
            <person name="Thwaite J.E."/>
            <person name="White O."/>
            <person name="Salzberg S.L."/>
            <person name="Thomason B."/>
            <person name="Friedlander A.M."/>
            <person name="Koehler T.M."/>
            <person name="Hanna P.C."/>
            <person name="Kolstoe A.-B."/>
            <person name="Fraser C.M."/>
        </authorList>
    </citation>
    <scope>NUCLEOTIDE SEQUENCE [LARGE SCALE GENOMIC DNA]</scope>
    <source>
        <strain>Ames / isolate Porton</strain>
    </source>
</reference>
<reference key="2">
    <citation type="journal article" date="2009" name="J. Bacteriol.">
        <title>The complete genome sequence of Bacillus anthracis Ames 'Ancestor'.</title>
        <authorList>
            <person name="Ravel J."/>
            <person name="Jiang L."/>
            <person name="Stanley S.T."/>
            <person name="Wilson M.R."/>
            <person name="Decker R.S."/>
            <person name="Read T.D."/>
            <person name="Worsham P."/>
            <person name="Keim P.S."/>
            <person name="Salzberg S.L."/>
            <person name="Fraser-Liggett C.M."/>
            <person name="Rasko D.A."/>
        </authorList>
    </citation>
    <scope>NUCLEOTIDE SEQUENCE [LARGE SCALE GENOMIC DNA]</scope>
    <source>
        <strain>Ames ancestor</strain>
    </source>
</reference>
<reference key="3">
    <citation type="submission" date="2004-01" db="EMBL/GenBank/DDBJ databases">
        <title>Complete genome sequence of Bacillus anthracis Sterne.</title>
        <authorList>
            <person name="Brettin T.S."/>
            <person name="Bruce D."/>
            <person name="Challacombe J.F."/>
            <person name="Gilna P."/>
            <person name="Han C."/>
            <person name="Hill K."/>
            <person name="Hitchcock P."/>
            <person name="Jackson P."/>
            <person name="Keim P."/>
            <person name="Longmire J."/>
            <person name="Lucas S."/>
            <person name="Okinaka R."/>
            <person name="Richardson P."/>
            <person name="Rubin E."/>
            <person name="Tice H."/>
        </authorList>
    </citation>
    <scope>NUCLEOTIDE SEQUENCE [LARGE SCALE GENOMIC DNA]</scope>
    <source>
        <strain>Sterne</strain>
    </source>
</reference>
<dbReference type="EMBL" id="AE016879">
    <property type="protein sequence ID" value="AAP27418.1"/>
    <property type="molecule type" value="Genomic_DNA"/>
</dbReference>
<dbReference type="EMBL" id="AE017334">
    <property type="protein sequence ID" value="AAT32778.1"/>
    <property type="molecule type" value="Genomic_DNA"/>
</dbReference>
<dbReference type="EMBL" id="AE017225">
    <property type="protein sequence ID" value="AAT55710.1"/>
    <property type="molecule type" value="Genomic_DNA"/>
</dbReference>
<dbReference type="RefSeq" id="NP_845932.1">
    <property type="nucleotide sequence ID" value="NC_003997.3"/>
</dbReference>
<dbReference type="RefSeq" id="WP_001133509.1">
    <property type="nucleotide sequence ID" value="NZ_WXXJ01000029.1"/>
</dbReference>
<dbReference type="RefSeq" id="YP_029659.1">
    <property type="nucleotide sequence ID" value="NC_005945.1"/>
</dbReference>
<dbReference type="SMR" id="Q81Y88"/>
<dbReference type="STRING" id="261594.GBAA_3669"/>
<dbReference type="DNASU" id="1086079"/>
<dbReference type="GeneID" id="93007575"/>
<dbReference type="KEGG" id="ban:BA_3669"/>
<dbReference type="KEGG" id="bar:GBAA_3669"/>
<dbReference type="KEGG" id="bat:BAS3403"/>
<dbReference type="PATRIC" id="fig|198094.11.peg.3640"/>
<dbReference type="eggNOG" id="ENOG50330RR">
    <property type="taxonomic scope" value="Bacteria"/>
</dbReference>
<dbReference type="HOGENOM" id="CLU_178266_1_0_9"/>
<dbReference type="OMA" id="MAKPDDR"/>
<dbReference type="OrthoDB" id="1799076at2"/>
<dbReference type="Proteomes" id="UP000000427">
    <property type="component" value="Chromosome"/>
</dbReference>
<dbReference type="Proteomes" id="UP000000594">
    <property type="component" value="Chromosome"/>
</dbReference>
<dbReference type="GO" id="GO:0030436">
    <property type="term" value="P:asexual sporulation"/>
    <property type="evidence" value="ECO:0007669"/>
    <property type="project" value="UniProtKB-UniRule"/>
</dbReference>
<dbReference type="GO" id="GO:0030435">
    <property type="term" value="P:sporulation resulting in formation of a cellular spore"/>
    <property type="evidence" value="ECO:0007669"/>
    <property type="project" value="UniProtKB-KW"/>
</dbReference>
<dbReference type="HAMAP" id="MF_01506">
    <property type="entry name" value="Tlp"/>
    <property type="match status" value="1"/>
</dbReference>
<dbReference type="InterPro" id="IPR017524">
    <property type="entry name" value="SASP_thioredoxin-like"/>
</dbReference>
<dbReference type="NCBIfam" id="TIGR03090">
    <property type="entry name" value="SASP_tlp"/>
    <property type="match status" value="1"/>
</dbReference>
<dbReference type="Pfam" id="PF19824">
    <property type="entry name" value="Tlp"/>
    <property type="match status" value="1"/>
</dbReference>
<sequence>MPNPDNRSDNAEKLQEMVQNTIDNFNEAKETAELSNEKDRSAIEAKNQRRLESIDSLKSEIKDES</sequence>
<protein>
    <recommendedName>
        <fullName evidence="1">Small, acid-soluble spore protein Tlp</fullName>
    </recommendedName>
</protein>
<feature type="chain" id="PRO_0000221494" description="Small, acid-soluble spore protein Tlp">
    <location>
        <begin position="1"/>
        <end position="65"/>
    </location>
</feature>
<name>TLP_BACAN</name>